<keyword id="KW-0378">Hydrolase</keyword>
<keyword id="KW-1185">Reference proteome</keyword>
<sequence>MSETRTRAHVFVSGTVQGVFYRASTRDAARERGVRGWVRNLDDGRVEAVFEGPESAVDSLIEWCHTGSPDASVSDVSVSYTEPEGIDGFHIRR</sequence>
<feature type="chain" id="PRO_0000326858" description="Acylphosphatase">
    <location>
        <begin position="1"/>
        <end position="93"/>
    </location>
</feature>
<feature type="domain" description="Acylphosphatase-like" evidence="1">
    <location>
        <begin position="7"/>
        <end position="93"/>
    </location>
</feature>
<feature type="active site" evidence="1">
    <location>
        <position position="22"/>
    </location>
</feature>
<feature type="active site" evidence="1">
    <location>
        <position position="40"/>
    </location>
</feature>
<reference key="1">
    <citation type="journal article" date="2006" name="BMC Genomics">
        <title>The genome of the square archaeon Haloquadratum walsbyi: life at the limits of water activity.</title>
        <authorList>
            <person name="Bolhuis H."/>
            <person name="Palm P."/>
            <person name="Wende A."/>
            <person name="Falb M."/>
            <person name="Rampp M."/>
            <person name="Rodriguez-Valera F."/>
            <person name="Pfeiffer F."/>
            <person name="Oesterhelt D."/>
        </authorList>
    </citation>
    <scope>NUCLEOTIDE SEQUENCE [LARGE SCALE GENOMIC DNA]</scope>
    <source>
        <strain>DSM 16790 / HBSQ001</strain>
    </source>
</reference>
<organism>
    <name type="scientific">Haloquadratum walsbyi (strain DSM 16790 / HBSQ001)</name>
    <dbReference type="NCBI Taxonomy" id="362976"/>
    <lineage>
        <taxon>Archaea</taxon>
        <taxon>Methanobacteriati</taxon>
        <taxon>Methanobacteriota</taxon>
        <taxon>Stenosarchaea group</taxon>
        <taxon>Halobacteria</taxon>
        <taxon>Halobacteriales</taxon>
        <taxon>Haloferacaceae</taxon>
        <taxon>Haloquadratum</taxon>
    </lineage>
</organism>
<accession>Q18K02</accession>
<comment type="catalytic activity">
    <reaction>
        <text>an acyl phosphate + H2O = a carboxylate + phosphate + H(+)</text>
        <dbReference type="Rhea" id="RHEA:14965"/>
        <dbReference type="ChEBI" id="CHEBI:15377"/>
        <dbReference type="ChEBI" id="CHEBI:15378"/>
        <dbReference type="ChEBI" id="CHEBI:29067"/>
        <dbReference type="ChEBI" id="CHEBI:43474"/>
        <dbReference type="ChEBI" id="CHEBI:59918"/>
        <dbReference type="EC" id="3.6.1.7"/>
    </reaction>
</comment>
<comment type="similarity">
    <text evidence="2">Belongs to the acylphosphatase family.</text>
</comment>
<dbReference type="EC" id="3.6.1.7"/>
<dbReference type="EMBL" id="AM180088">
    <property type="protein sequence ID" value="CAJ51651.1"/>
    <property type="molecule type" value="Genomic_DNA"/>
</dbReference>
<dbReference type="RefSeq" id="WP_011570804.1">
    <property type="nucleotide sequence ID" value="NC_008212.1"/>
</dbReference>
<dbReference type="SMR" id="Q18K02"/>
<dbReference type="STRING" id="362976.HQ_1523A"/>
<dbReference type="GeneID" id="4193687"/>
<dbReference type="KEGG" id="hwa:HQ_1523A"/>
<dbReference type="eggNOG" id="arCOG01674">
    <property type="taxonomic scope" value="Archaea"/>
</dbReference>
<dbReference type="HOGENOM" id="CLU_141932_3_2_2"/>
<dbReference type="Proteomes" id="UP000001975">
    <property type="component" value="Chromosome"/>
</dbReference>
<dbReference type="GO" id="GO:0003998">
    <property type="term" value="F:acylphosphatase activity"/>
    <property type="evidence" value="ECO:0007669"/>
    <property type="project" value="UniProtKB-EC"/>
</dbReference>
<dbReference type="Gene3D" id="3.30.70.100">
    <property type="match status" value="1"/>
</dbReference>
<dbReference type="InterPro" id="IPR020456">
    <property type="entry name" value="Acylphosphatase"/>
</dbReference>
<dbReference type="InterPro" id="IPR001792">
    <property type="entry name" value="Acylphosphatase-like_dom"/>
</dbReference>
<dbReference type="InterPro" id="IPR036046">
    <property type="entry name" value="Acylphosphatase-like_dom_sf"/>
</dbReference>
<dbReference type="InterPro" id="IPR017968">
    <property type="entry name" value="Acylphosphatase_CS"/>
</dbReference>
<dbReference type="NCBIfam" id="NF011016">
    <property type="entry name" value="PRK14444.1"/>
    <property type="match status" value="1"/>
</dbReference>
<dbReference type="PANTHER" id="PTHR47268">
    <property type="entry name" value="ACYLPHOSPHATASE"/>
    <property type="match status" value="1"/>
</dbReference>
<dbReference type="PANTHER" id="PTHR47268:SF4">
    <property type="entry name" value="ACYLPHOSPHATASE"/>
    <property type="match status" value="1"/>
</dbReference>
<dbReference type="Pfam" id="PF00708">
    <property type="entry name" value="Acylphosphatase"/>
    <property type="match status" value="1"/>
</dbReference>
<dbReference type="PRINTS" id="PR00112">
    <property type="entry name" value="ACYLPHPHTASE"/>
</dbReference>
<dbReference type="SUPFAM" id="SSF54975">
    <property type="entry name" value="Acylphosphatase/BLUF domain-like"/>
    <property type="match status" value="1"/>
</dbReference>
<dbReference type="PROSITE" id="PS00151">
    <property type="entry name" value="ACYLPHOSPHATASE_2"/>
    <property type="match status" value="1"/>
</dbReference>
<dbReference type="PROSITE" id="PS51160">
    <property type="entry name" value="ACYLPHOSPHATASE_3"/>
    <property type="match status" value="1"/>
</dbReference>
<protein>
    <recommendedName>
        <fullName>Acylphosphatase</fullName>
        <ecNumber>3.6.1.7</ecNumber>
    </recommendedName>
    <alternativeName>
        <fullName>Acylphosphate phosphohydrolase</fullName>
    </alternativeName>
</protein>
<evidence type="ECO:0000255" key="1">
    <source>
        <dbReference type="PROSITE-ProRule" id="PRU00520"/>
    </source>
</evidence>
<evidence type="ECO:0000305" key="2"/>
<gene>
    <name type="primary">acyP</name>
    <name type="ordered locus">HQ_1523A</name>
</gene>
<proteinExistence type="inferred from homology"/>
<name>ACYP_HALWD</name>